<proteinExistence type="inferred from homology"/>
<keyword id="KW-0963">Cytoplasm</keyword>
<keyword id="KW-0255">Endonuclease</keyword>
<keyword id="KW-0378">Hydrolase</keyword>
<keyword id="KW-0464">Manganese</keyword>
<keyword id="KW-0479">Metal-binding</keyword>
<keyword id="KW-0540">Nuclease</keyword>
<reference key="1">
    <citation type="submission" date="2008-01" db="EMBL/GenBank/DDBJ databases">
        <title>Complete sequence of Shewanella halifaxensis HAW-EB4.</title>
        <authorList>
            <consortium name="US DOE Joint Genome Institute"/>
            <person name="Copeland A."/>
            <person name="Lucas S."/>
            <person name="Lapidus A."/>
            <person name="Glavina del Rio T."/>
            <person name="Dalin E."/>
            <person name="Tice H."/>
            <person name="Bruce D."/>
            <person name="Goodwin L."/>
            <person name="Pitluck S."/>
            <person name="Sims D."/>
            <person name="Brettin T."/>
            <person name="Detter J.C."/>
            <person name="Han C."/>
            <person name="Kuske C.R."/>
            <person name="Schmutz J."/>
            <person name="Larimer F."/>
            <person name="Land M."/>
            <person name="Hauser L."/>
            <person name="Kyrpides N."/>
            <person name="Kim E."/>
            <person name="Zhao J.-S."/>
            <person name="Richardson P."/>
        </authorList>
    </citation>
    <scope>NUCLEOTIDE SEQUENCE [LARGE SCALE GENOMIC DNA]</scope>
    <source>
        <strain>HAW-EB4</strain>
    </source>
</reference>
<accession>B0TP69</accession>
<comment type="function">
    <text evidence="1">Endonuclease that specifically degrades the RNA of RNA-DNA hybrids.</text>
</comment>
<comment type="catalytic activity">
    <reaction evidence="1">
        <text>Endonucleolytic cleavage to 5'-phosphomonoester.</text>
        <dbReference type="EC" id="3.1.26.4"/>
    </reaction>
</comment>
<comment type="cofactor">
    <cofactor evidence="1">
        <name>Mn(2+)</name>
        <dbReference type="ChEBI" id="CHEBI:29035"/>
    </cofactor>
    <cofactor evidence="1">
        <name>Mg(2+)</name>
        <dbReference type="ChEBI" id="CHEBI:18420"/>
    </cofactor>
    <text evidence="1">Manganese or magnesium. Binds 1 divalent metal ion per monomer in the absence of substrate. May bind a second metal ion after substrate binding.</text>
</comment>
<comment type="subcellular location">
    <subcellularLocation>
        <location evidence="1">Cytoplasm</location>
    </subcellularLocation>
</comment>
<comment type="similarity">
    <text evidence="1">Belongs to the RNase HII family.</text>
</comment>
<organism>
    <name type="scientific">Shewanella halifaxensis (strain HAW-EB4)</name>
    <dbReference type="NCBI Taxonomy" id="458817"/>
    <lineage>
        <taxon>Bacteria</taxon>
        <taxon>Pseudomonadati</taxon>
        <taxon>Pseudomonadota</taxon>
        <taxon>Gammaproteobacteria</taxon>
        <taxon>Alteromonadales</taxon>
        <taxon>Shewanellaceae</taxon>
        <taxon>Shewanella</taxon>
    </lineage>
</organism>
<sequence>MAVIKGITPEQVAQICIGHYAGVDEVGRGPLIGNVVTAAVILDPNNPIEGLNDSKKLSEKKRELLFEQIQQKALSVSVGSATPAEIDELNILHATMLAMQRAVAGLNIKPTSVLVDGNRTPDFGVESHAIIKGDGLIDAISAASIIAKVVRDREMDALALQYPEYGFDKHKGYPTKAHFEALTQHGVLPEHRKSFRPVREALA</sequence>
<protein>
    <recommendedName>
        <fullName evidence="1">Ribonuclease HII</fullName>
        <shortName evidence="1">RNase HII</shortName>
        <ecNumber evidence="1">3.1.26.4</ecNumber>
    </recommendedName>
</protein>
<feature type="chain" id="PRO_1000074934" description="Ribonuclease HII">
    <location>
        <begin position="1"/>
        <end position="203"/>
    </location>
</feature>
<feature type="domain" description="RNase H type-2" evidence="2">
    <location>
        <begin position="18"/>
        <end position="203"/>
    </location>
</feature>
<feature type="binding site" evidence="1">
    <location>
        <position position="24"/>
    </location>
    <ligand>
        <name>a divalent metal cation</name>
        <dbReference type="ChEBI" id="CHEBI:60240"/>
    </ligand>
</feature>
<feature type="binding site" evidence="1">
    <location>
        <position position="25"/>
    </location>
    <ligand>
        <name>a divalent metal cation</name>
        <dbReference type="ChEBI" id="CHEBI:60240"/>
    </ligand>
</feature>
<feature type="binding site" evidence="1">
    <location>
        <position position="116"/>
    </location>
    <ligand>
        <name>a divalent metal cation</name>
        <dbReference type="ChEBI" id="CHEBI:60240"/>
    </ligand>
</feature>
<dbReference type="EC" id="3.1.26.4" evidence="1"/>
<dbReference type="EMBL" id="CP000931">
    <property type="protein sequence ID" value="ABZ77516.1"/>
    <property type="molecule type" value="Genomic_DNA"/>
</dbReference>
<dbReference type="RefSeq" id="WP_012278043.1">
    <property type="nucleotide sequence ID" value="NC_010334.1"/>
</dbReference>
<dbReference type="SMR" id="B0TP69"/>
<dbReference type="STRING" id="458817.Shal_2967"/>
<dbReference type="KEGG" id="shl:Shal_2967"/>
<dbReference type="eggNOG" id="COG0164">
    <property type="taxonomic scope" value="Bacteria"/>
</dbReference>
<dbReference type="HOGENOM" id="CLU_036532_3_2_6"/>
<dbReference type="OrthoDB" id="9803420at2"/>
<dbReference type="Proteomes" id="UP000001317">
    <property type="component" value="Chromosome"/>
</dbReference>
<dbReference type="GO" id="GO:0005737">
    <property type="term" value="C:cytoplasm"/>
    <property type="evidence" value="ECO:0007669"/>
    <property type="project" value="UniProtKB-SubCell"/>
</dbReference>
<dbReference type="GO" id="GO:0032299">
    <property type="term" value="C:ribonuclease H2 complex"/>
    <property type="evidence" value="ECO:0007669"/>
    <property type="project" value="TreeGrafter"/>
</dbReference>
<dbReference type="GO" id="GO:0030145">
    <property type="term" value="F:manganese ion binding"/>
    <property type="evidence" value="ECO:0007669"/>
    <property type="project" value="UniProtKB-UniRule"/>
</dbReference>
<dbReference type="GO" id="GO:0003723">
    <property type="term" value="F:RNA binding"/>
    <property type="evidence" value="ECO:0007669"/>
    <property type="project" value="InterPro"/>
</dbReference>
<dbReference type="GO" id="GO:0004523">
    <property type="term" value="F:RNA-DNA hybrid ribonuclease activity"/>
    <property type="evidence" value="ECO:0007669"/>
    <property type="project" value="UniProtKB-UniRule"/>
</dbReference>
<dbReference type="GO" id="GO:0043137">
    <property type="term" value="P:DNA replication, removal of RNA primer"/>
    <property type="evidence" value="ECO:0007669"/>
    <property type="project" value="TreeGrafter"/>
</dbReference>
<dbReference type="GO" id="GO:0006298">
    <property type="term" value="P:mismatch repair"/>
    <property type="evidence" value="ECO:0007669"/>
    <property type="project" value="TreeGrafter"/>
</dbReference>
<dbReference type="CDD" id="cd07182">
    <property type="entry name" value="RNase_HII_bacteria_HII_like"/>
    <property type="match status" value="1"/>
</dbReference>
<dbReference type="FunFam" id="3.30.420.10:FF:000006">
    <property type="entry name" value="Ribonuclease HII"/>
    <property type="match status" value="1"/>
</dbReference>
<dbReference type="Gene3D" id="3.30.420.10">
    <property type="entry name" value="Ribonuclease H-like superfamily/Ribonuclease H"/>
    <property type="match status" value="1"/>
</dbReference>
<dbReference type="HAMAP" id="MF_00052_B">
    <property type="entry name" value="RNase_HII_B"/>
    <property type="match status" value="1"/>
</dbReference>
<dbReference type="InterPro" id="IPR022898">
    <property type="entry name" value="RNase_HII"/>
</dbReference>
<dbReference type="InterPro" id="IPR001352">
    <property type="entry name" value="RNase_HII/HIII"/>
</dbReference>
<dbReference type="InterPro" id="IPR024567">
    <property type="entry name" value="RNase_HII/HIII_dom"/>
</dbReference>
<dbReference type="InterPro" id="IPR012337">
    <property type="entry name" value="RNaseH-like_sf"/>
</dbReference>
<dbReference type="InterPro" id="IPR036397">
    <property type="entry name" value="RNaseH_sf"/>
</dbReference>
<dbReference type="NCBIfam" id="NF000594">
    <property type="entry name" value="PRK00015.1-1"/>
    <property type="match status" value="1"/>
</dbReference>
<dbReference type="NCBIfam" id="NF000595">
    <property type="entry name" value="PRK00015.1-3"/>
    <property type="match status" value="1"/>
</dbReference>
<dbReference type="NCBIfam" id="NF000596">
    <property type="entry name" value="PRK00015.1-4"/>
    <property type="match status" value="1"/>
</dbReference>
<dbReference type="PANTHER" id="PTHR10954">
    <property type="entry name" value="RIBONUCLEASE H2 SUBUNIT A"/>
    <property type="match status" value="1"/>
</dbReference>
<dbReference type="PANTHER" id="PTHR10954:SF18">
    <property type="entry name" value="RIBONUCLEASE HII"/>
    <property type="match status" value="1"/>
</dbReference>
<dbReference type="Pfam" id="PF01351">
    <property type="entry name" value="RNase_HII"/>
    <property type="match status" value="1"/>
</dbReference>
<dbReference type="SUPFAM" id="SSF53098">
    <property type="entry name" value="Ribonuclease H-like"/>
    <property type="match status" value="1"/>
</dbReference>
<dbReference type="PROSITE" id="PS51975">
    <property type="entry name" value="RNASE_H_2"/>
    <property type="match status" value="1"/>
</dbReference>
<name>RNH2_SHEHH</name>
<evidence type="ECO:0000255" key="1">
    <source>
        <dbReference type="HAMAP-Rule" id="MF_00052"/>
    </source>
</evidence>
<evidence type="ECO:0000255" key="2">
    <source>
        <dbReference type="PROSITE-ProRule" id="PRU01319"/>
    </source>
</evidence>
<gene>
    <name evidence="1" type="primary">rnhB</name>
    <name type="ordered locus">Shal_2967</name>
</gene>